<gene>
    <name type="primary">cvfB</name>
    <name type="ordered locus">SAOUHSC_01391</name>
</gene>
<organism>
    <name type="scientific">Staphylococcus aureus (strain NCTC 8325 / PS 47)</name>
    <dbReference type="NCBI Taxonomy" id="93061"/>
    <lineage>
        <taxon>Bacteria</taxon>
        <taxon>Bacillati</taxon>
        <taxon>Bacillota</taxon>
        <taxon>Bacilli</taxon>
        <taxon>Bacillales</taxon>
        <taxon>Staphylococcaceae</taxon>
        <taxon>Staphylococcus</taxon>
    </lineage>
</organism>
<evidence type="ECO:0000269" key="1">
    <source>
    </source>
</evidence>
<evidence type="ECO:0000305" key="2"/>
<feature type="chain" id="PRO_0000282296" description="Conserved virulence factor B">
    <location>
        <begin position="1"/>
        <end position="300"/>
    </location>
</feature>
<reference key="1">
    <citation type="book" date="2006" name="Gram positive pathogens, 2nd edition">
        <title>The Staphylococcus aureus NCTC 8325 genome.</title>
        <editorList>
            <person name="Fischetti V."/>
            <person name="Novick R."/>
            <person name="Ferretti J."/>
            <person name="Portnoy D."/>
            <person name="Rood J."/>
        </editorList>
        <authorList>
            <person name="Gillaspy A.F."/>
            <person name="Worrell V."/>
            <person name="Orvis J."/>
            <person name="Roe B.A."/>
            <person name="Dyer D.W."/>
            <person name="Iandolo J.J."/>
        </authorList>
    </citation>
    <scope>NUCLEOTIDE SEQUENCE [LARGE SCALE GENOMIC DNA]</scope>
    <source>
        <strain>NCTC 8325 / PS 47</strain>
    </source>
</reference>
<reference key="2">
    <citation type="journal article" date="2004" name="J. Bacteriol.">
        <title>Large-scale identification of genes required for full virulence of Staphylococcus aureus.</title>
        <authorList>
            <person name="Benton B.M."/>
            <person name="Zhang J.P."/>
            <person name="Bond S."/>
            <person name="Pope C."/>
            <person name="Christian T."/>
            <person name="Lee L."/>
            <person name="Winterberg K.M."/>
            <person name="Schmid M.B."/>
            <person name="Buysse J.M."/>
        </authorList>
    </citation>
    <scope>VIRULENCE FUNCTION IN MURINE MODEL OF SYSTEMIC INFECTION</scope>
</reference>
<reference key="3">
    <citation type="journal article" date="2005" name="Mol. Microbiol.">
        <title>Silkworm pathogenic bacteria infection model for identification of novel virulence genes.</title>
        <authorList>
            <person name="Kaito C."/>
            <person name="Kurokawa K."/>
            <person name="Matsumoto Y."/>
            <person name="Terao Y."/>
            <person name="Kawabata S."/>
            <person name="Hamada S."/>
            <person name="Sekimizu K."/>
        </authorList>
    </citation>
    <scope>VIRULENCE FUNCTION IN SILKWORM-INFECTION MODEL</scope>
</reference>
<reference key="4">
    <citation type="journal article" date="2007" name="Infect. Immun.">
        <title>Regulation of exoprotein gene expression by the Staphylococcus aureus cvfB gene.</title>
        <authorList>
            <person name="Matsumoto Y."/>
            <person name="Kaito C."/>
            <person name="Morishita D."/>
            <person name="Kurokawa K."/>
            <person name="Sekimizu K."/>
        </authorList>
    </citation>
    <scope>FUNCTION</scope>
</reference>
<name>CVFB_STAA8</name>
<protein>
    <recommendedName>
        <fullName>Conserved virulence factor B</fullName>
    </recommendedName>
</protein>
<keyword id="KW-1185">Reference proteome</keyword>
<keyword id="KW-0843">Virulence</keyword>
<comment type="function">
    <text evidence="1">Contributes to the expression of virulence factors and to pathogenicity via both agr-dependent and agr-independent pathways. Involved in the production of hemolysin, DNase, protease and protein A. Contributes to virulence in silkworm-infection model and murine model of systemic infection.</text>
</comment>
<comment type="similarity">
    <text evidence="2">Belongs to the CvfB family.</text>
</comment>
<sequence>MALDKDIVGSIEFLEVVGLQGSTYLLKGPNGENVKLNQSEMNDDDELEVGEEYSFFIYPNRSGELFATQNMPDITKDKYDFAKVLKTDRDGARIDVGLPREVLVPWEDLPKVKSLWPQPGDYLLVTLRIDRENHMYGRLASESVVENMFTPVHDDNLKNEVIEAKPYRVLRIGSFLLSESGYKIFVHESERKAEPRLGESVQVRIIGHNDKGELNGSFLPLAHERLDDDGQVIFDLLVEYDGELPFWDKSSPEAIKEVFNMSKGSFKRAIGHLYKQKIINIETGKIALTKKGWSRMDSKE</sequence>
<accession>Q2FYP3</accession>
<proteinExistence type="evidence at protein level"/>
<dbReference type="EMBL" id="CP000253">
    <property type="protein sequence ID" value="ABD30486.1"/>
    <property type="molecule type" value="Genomic_DNA"/>
</dbReference>
<dbReference type="RefSeq" id="WP_001162359.1">
    <property type="nucleotide sequence ID" value="NZ_LS483365.1"/>
</dbReference>
<dbReference type="RefSeq" id="YP_499919.1">
    <property type="nucleotide sequence ID" value="NC_007795.1"/>
</dbReference>
<dbReference type="SMR" id="Q2FYP3"/>
<dbReference type="STRING" id="93061.SAOUHSC_01391"/>
<dbReference type="PaxDb" id="1280-SAXN108_1406"/>
<dbReference type="GeneID" id="3920682"/>
<dbReference type="KEGG" id="sao:SAOUHSC_01391"/>
<dbReference type="PATRIC" id="fig|93061.5.peg.1273"/>
<dbReference type="eggNOG" id="COG2996">
    <property type="taxonomic scope" value="Bacteria"/>
</dbReference>
<dbReference type="HOGENOM" id="CLU_064885_0_0_9"/>
<dbReference type="OrthoDB" id="9801597at2"/>
<dbReference type="PHI-base" id="PHI:2966"/>
<dbReference type="PRO" id="PR:Q2FYP3"/>
<dbReference type="Proteomes" id="UP000008816">
    <property type="component" value="Chromosome"/>
</dbReference>
<dbReference type="Gene3D" id="2.40.50.140">
    <property type="entry name" value="Nucleic acid-binding proteins"/>
    <property type="match status" value="2"/>
</dbReference>
<dbReference type="Gene3D" id="1.10.10.10">
    <property type="entry name" value="Winged helix-like DNA-binding domain superfamily/Winged helix DNA-binding domain"/>
    <property type="match status" value="1"/>
</dbReference>
<dbReference type="InterPro" id="IPR014464">
    <property type="entry name" value="CvfB_fam"/>
</dbReference>
<dbReference type="InterPro" id="IPR048588">
    <property type="entry name" value="CvfB_S1_2nd"/>
</dbReference>
<dbReference type="InterPro" id="IPR048587">
    <property type="entry name" value="CvfB_S1_3rd"/>
</dbReference>
<dbReference type="InterPro" id="IPR039566">
    <property type="entry name" value="CvfB_S1_st"/>
</dbReference>
<dbReference type="InterPro" id="IPR040764">
    <property type="entry name" value="CvfB_WH"/>
</dbReference>
<dbReference type="InterPro" id="IPR012340">
    <property type="entry name" value="NA-bd_OB-fold"/>
</dbReference>
<dbReference type="InterPro" id="IPR036388">
    <property type="entry name" value="WH-like_DNA-bd_sf"/>
</dbReference>
<dbReference type="PANTHER" id="PTHR37296">
    <property type="entry name" value="CONSERVED VIRULENCE FACTOR B"/>
    <property type="match status" value="1"/>
</dbReference>
<dbReference type="PANTHER" id="PTHR37296:SF1">
    <property type="entry name" value="CONSERVED VIRULENCE FACTOR B"/>
    <property type="match status" value="1"/>
</dbReference>
<dbReference type="Pfam" id="PF21191">
    <property type="entry name" value="CvfB_1st"/>
    <property type="match status" value="1"/>
</dbReference>
<dbReference type="Pfam" id="PF21543">
    <property type="entry name" value="CvfB_2nd"/>
    <property type="match status" value="1"/>
</dbReference>
<dbReference type="Pfam" id="PF17783">
    <property type="entry name" value="CvfB_WH"/>
    <property type="match status" value="1"/>
</dbReference>
<dbReference type="Pfam" id="PF13509">
    <property type="entry name" value="S1_2"/>
    <property type="match status" value="1"/>
</dbReference>
<dbReference type="PIRSF" id="PIRSF012524">
    <property type="entry name" value="YitL_S1"/>
    <property type="match status" value="1"/>
</dbReference>